<feature type="chain" id="PRO_0000341617" description="Genome polyprotein">
    <location>
        <begin position="1"/>
        <end position="1789"/>
    </location>
</feature>
<feature type="chain" id="PRO_0000341618" description="NS1-2">
    <location>
        <begin position="1"/>
        <end position="398"/>
    </location>
</feature>
<feature type="chain" id="PRO_0000460161" description="NS1">
    <location>
        <begin position="1"/>
        <end position="123"/>
    </location>
</feature>
<feature type="chain" id="PRO_0000460162" description="NS2">
    <location>
        <begin position="124"/>
        <end position="341"/>
    </location>
</feature>
<feature type="chain" id="PRO_0000341619" description="NTPase">
    <location>
        <begin position="399"/>
        <end position="761"/>
    </location>
</feature>
<feature type="chain" id="PRO_0000341620" description="NS4">
    <location>
        <begin position="762"/>
        <end position="962"/>
    </location>
</feature>
<feature type="chain" id="PRO_0000341621" description="Viral genome-linked protein">
    <location>
        <begin position="963"/>
        <end position="1100"/>
    </location>
</feature>
<feature type="chain" id="PRO_0000341622" description="3C-like protease">
    <location>
        <begin position="1101"/>
        <end position="1281"/>
    </location>
</feature>
<feature type="chain" id="PRO_0000341623" description="RNA-directed RNA polymerase">
    <location>
        <begin position="1282"/>
        <end position="1789"/>
    </location>
</feature>
<feature type="domain" description="SF3 helicase" evidence="8">
    <location>
        <begin position="532"/>
        <end position="697"/>
    </location>
</feature>
<feature type="domain" description="Peptidase C37" evidence="9">
    <location>
        <begin position="1101"/>
        <end position="1281"/>
    </location>
</feature>
<feature type="domain" description="RdRp catalytic" evidence="7">
    <location>
        <begin position="1516"/>
        <end position="1637"/>
    </location>
</feature>
<feature type="region of interest" description="Interaction with host MAP1LC3A/LC3" evidence="2">
    <location>
        <begin position="1"/>
        <end position="183"/>
    </location>
</feature>
<feature type="region of interest" description="Disordered" evidence="10">
    <location>
        <begin position="1"/>
        <end position="25"/>
    </location>
</feature>
<feature type="region of interest" description="Interaction with NTPase" evidence="2">
    <location>
        <begin position="184"/>
        <end position="398"/>
    </location>
</feature>
<feature type="region of interest" description="Interaction with NS4" evidence="2">
    <location>
        <begin position="301"/>
        <end position="398"/>
    </location>
</feature>
<feature type="region of interest" description="Host ER membrane association" evidence="2">
    <location>
        <begin position="318"/>
        <end position="349"/>
    </location>
</feature>
<feature type="region of interest" description="Host ER membrane association" evidence="2">
    <location>
        <begin position="360"/>
        <end position="398"/>
    </location>
</feature>
<feature type="region of interest" description="Interaction with NS1-2 and NS4 and homooligomerization" evidence="2">
    <location>
        <begin position="399"/>
        <end position="574"/>
    </location>
</feature>
<feature type="region of interest" description="Important for mitochondrion targeting" evidence="2">
    <location>
        <begin position="651"/>
        <end position="756"/>
    </location>
</feature>
<feature type="region of interest" description="Functions as endoplasmic reticulum export signal" evidence="16">
    <location>
        <begin position="826"/>
        <end position="832"/>
    </location>
</feature>
<feature type="region of interest" description="Host membrane association" evidence="16">
    <location>
        <begin position="865"/>
        <end position="910"/>
    </location>
</feature>
<feature type="region of interest" description="Disordered" evidence="10">
    <location>
        <begin position="958"/>
        <end position="981"/>
    </location>
</feature>
<feature type="region of interest" description="Acidic" evidence="5">
    <location>
        <begin position="989"/>
        <end position="994"/>
    </location>
</feature>
<feature type="region of interest" description="Interaction with host EIF4G" evidence="2">
    <location>
        <begin position="1084"/>
        <end position="1100"/>
    </location>
</feature>
<feature type="compositionally biased region" description="Low complexity" evidence="10">
    <location>
        <begin position="12"/>
        <end position="23"/>
    </location>
</feature>
<feature type="compositionally biased region" description="Basic residues" evidence="10">
    <location>
        <begin position="966"/>
        <end position="976"/>
    </location>
</feature>
<feature type="active site" description="For 3CLpro activity" evidence="9 14 19">
    <location>
        <position position="1130"/>
    </location>
</feature>
<feature type="active site" description="For 3CLpro activity" evidence="9 14 19">
    <location>
        <position position="1154"/>
    </location>
</feature>
<feature type="active site" description="For 3CLpro activity" evidence="9 14 19">
    <location>
        <position position="1239"/>
    </location>
</feature>
<feature type="binding site" evidence="8">
    <location>
        <begin position="560"/>
        <end position="567"/>
    </location>
    <ligand>
        <name>ATP</name>
        <dbReference type="ChEBI" id="CHEBI:30616"/>
    </ligand>
</feature>
<feature type="binding site" evidence="5">
    <location>
        <position position="1520"/>
    </location>
    <ligand>
        <name>Mg(2+)</name>
        <dbReference type="ChEBI" id="CHEBI:18420"/>
        <note>catalytic; for RNA-directed RNA polymerase activity</note>
    </ligand>
</feature>
<feature type="binding site" evidence="5">
    <location>
        <position position="1522"/>
    </location>
    <ligand>
        <name>Mg(2+)</name>
        <dbReference type="ChEBI" id="CHEBI:18420"/>
        <note>catalytic; for RNA-directed RNA polymerase activity</note>
    </ligand>
</feature>
<feature type="binding site" evidence="5">
    <location>
        <position position="1624"/>
    </location>
    <ligand>
        <name>Mg(2+)</name>
        <dbReference type="ChEBI" id="CHEBI:18420"/>
        <note>catalytic; for RNA-directed RNA polymerase activity</note>
    </ligand>
</feature>
<feature type="binding site" evidence="5">
    <location>
        <position position="1625"/>
    </location>
    <ligand>
        <name>Mg(2+)</name>
        <dbReference type="ChEBI" id="CHEBI:18420"/>
        <note>catalytic; for RNA-directed RNA polymerase activity</note>
    </ligand>
</feature>
<feature type="site" description="Cleavage; by host CASP3" evidence="5">
    <location>
        <begin position="123"/>
        <end position="124"/>
    </location>
</feature>
<feature type="site" description="Cleavage; by 3CLpro" evidence="30 31">
    <location>
        <begin position="398"/>
        <end position="399"/>
    </location>
</feature>
<feature type="site" description="Cleavage; by 3CLpro" evidence="30 31">
    <location>
        <begin position="761"/>
        <end position="762"/>
    </location>
</feature>
<feature type="site" description="Cleavage; by 3CLpro" evidence="30 31">
    <location>
        <begin position="962"/>
        <end position="963"/>
    </location>
</feature>
<feature type="site" description="Cleavage; by 3CLpro" evidence="30 31">
    <location>
        <begin position="1100"/>
        <end position="1101"/>
    </location>
</feature>
<feature type="site" description="Cleavage; by 3CLpro" evidence="30 31">
    <location>
        <begin position="1281"/>
        <end position="1282"/>
    </location>
</feature>
<feature type="modified residue" description="O-(5'-phospho-RNA)-tyrosine" evidence="5">
    <location>
        <position position="992"/>
    </location>
</feature>
<feature type="mutagenesis site" description="No effect on p48-p41 cleavage." evidence="11">
    <original>D</original>
    <variation>A</variation>
    <variation>E</variation>
    <variation>N</variation>
    <location>
        <position position="394"/>
    </location>
</feature>
<feature type="mutagenesis site" description="Complete loss of p48-p41 cleavage." evidence="11">
    <original>F</original>
    <variation>G</variation>
    <location>
        <position position="395"/>
    </location>
</feature>
<feature type="mutagenesis site" description="No effect on p48-p41 cleavage." evidence="11">
    <original>F</original>
    <variation>I</variation>
    <variation>Y</variation>
    <location>
        <position position="395"/>
    </location>
</feature>
<feature type="mutagenesis site" description="No effect on p48-p41 cleavage." evidence="11">
    <original>Q</original>
    <variation>E</variation>
    <variation>N</variation>
    <location>
        <position position="398"/>
    </location>
</feature>
<feature type="mutagenesis site" description="Complete loss of p48-p41 cleavage." evidence="11">
    <original>Q</original>
    <variation>G</variation>
    <location>
        <position position="398"/>
    </location>
</feature>
<feature type="mutagenesis site" description="No effect on p48-p41 cleavage." evidence="11">
    <original>G</original>
    <variation>A</variation>
    <location>
        <position position="399"/>
    </location>
</feature>
<feature type="mutagenesis site" description="Dramatic loss of the helix-unwinding activity of the NTPase." evidence="24">
    <original>GK</original>
    <variation>AA</variation>
    <location>
        <begin position="565"/>
        <end position="566"/>
    </location>
</feature>
<feature type="mutagenesis site" description="Dramatic loss of the helix-unwinding activity of the NTPase.; when associated with 565-AA-566." evidence="24">
    <original>DD</original>
    <variation>AA</variation>
    <location>
        <begin position="610"/>
        <end position="611"/>
    </location>
</feature>
<feature type="mutagenesis site" description="Mislocalization of NS4 and absence of inhibition of host protein secretion and Golgi disassembly." evidence="16">
    <original>YIIE</original>
    <variation>AIIA</variation>
    <location>
        <begin position="826"/>
        <end position="829"/>
    </location>
</feature>
<feature type="mutagenesis site" description="Complete loss of 3CLpro activity." evidence="14">
    <original>E</original>
    <variation>A</variation>
    <location>
        <position position="1154"/>
    </location>
</feature>
<feature type="mutagenesis site" description="Complete loss of 3CLpro activity." evidence="11">
    <original>E</original>
    <variation>G</variation>
    <location>
        <position position="1154"/>
    </location>
</feature>
<feature type="mutagenesis site" description="No effect on 3CLpro activity." evidence="11">
    <original>D</original>
    <variation>G</variation>
    <location>
        <position position="1167"/>
    </location>
</feature>
<feature type="mutagenesis site" description="Complete loss of 3CLpro activity." evidence="19">
    <original>C</original>
    <variation>A</variation>
    <location>
        <position position="1239"/>
    </location>
</feature>
<feature type="mutagenesis site" description="No effect on 3CLpro activity." evidence="11">
    <original>E</original>
    <variation>Q</variation>
    <location>
        <position position="1281"/>
    </location>
</feature>
<feature type="helix" evidence="65">
    <location>
        <begin position="1103"/>
        <end position="1106"/>
    </location>
</feature>
<feature type="strand" evidence="65">
    <location>
        <begin position="1109"/>
        <end position="1112"/>
    </location>
</feature>
<feature type="strand" evidence="65">
    <location>
        <begin position="1115"/>
        <end position="1128"/>
    </location>
</feature>
<feature type="helix" evidence="65">
    <location>
        <begin position="1129"/>
        <end position="1131"/>
    </location>
</feature>
<feature type="strand" evidence="65">
    <location>
        <begin position="1137"/>
        <end position="1139"/>
    </location>
</feature>
<feature type="helix" evidence="65">
    <location>
        <begin position="1144"/>
        <end position="1146"/>
    </location>
</feature>
<feature type="strand" evidence="65">
    <location>
        <begin position="1147"/>
        <end position="1152"/>
    </location>
</feature>
<feature type="strand" evidence="65">
    <location>
        <begin position="1155"/>
        <end position="1162"/>
    </location>
</feature>
<feature type="strand" evidence="65">
    <location>
        <begin position="1182"/>
        <end position="1188"/>
    </location>
</feature>
<feature type="strand" evidence="63">
    <location>
        <begin position="1190"/>
        <end position="1192"/>
    </location>
</feature>
<feature type="strand" evidence="65">
    <location>
        <begin position="1194"/>
        <end position="1209"/>
    </location>
</feature>
<feature type="strand" evidence="65">
    <location>
        <begin position="1212"/>
        <end position="1221"/>
    </location>
</feature>
<feature type="helix" evidence="65">
    <location>
        <begin position="1223"/>
        <end position="1225"/>
    </location>
</feature>
<feature type="helix" evidence="67">
    <location>
        <begin position="1226"/>
        <end position="1229"/>
    </location>
</feature>
<feature type="turn" evidence="66">
    <location>
        <begin position="1232"/>
        <end position="1234"/>
    </location>
</feature>
<feature type="helix" evidence="68">
    <location>
        <begin position="1236"/>
        <end position="1238"/>
    </location>
</feature>
<feature type="strand" evidence="65">
    <location>
        <begin position="1242"/>
        <end position="1247"/>
    </location>
</feature>
<feature type="strand" evidence="65">
    <location>
        <begin position="1250"/>
        <end position="1260"/>
    </location>
</feature>
<feature type="turn" evidence="66">
    <location>
        <begin position="1262"/>
        <end position="1265"/>
    </location>
</feature>
<feature type="strand" evidence="65">
    <location>
        <begin position="1266"/>
        <end position="1270"/>
    </location>
</feature>
<feature type="strand" evidence="64">
    <location>
        <begin position="1275"/>
        <end position="1278"/>
    </location>
</feature>
<dbReference type="EC" id="3.6.1.15" evidence="24"/>
<dbReference type="EC" id="3.4.22.66" evidence="14 17"/>
<dbReference type="EC" id="2.7.7.48" evidence="5"/>
<dbReference type="EMBL" id="M87661">
    <property type="protein sequence ID" value="AAB50465.1"/>
    <property type="molecule type" value="Genomic_RNA"/>
</dbReference>
<dbReference type="PIR" id="A53260">
    <property type="entry name" value="A53260"/>
</dbReference>
<dbReference type="PIR" id="C37471">
    <property type="entry name" value="C37471"/>
</dbReference>
<dbReference type="PIR" id="C53260">
    <property type="entry name" value="C53260"/>
</dbReference>
<dbReference type="PIR" id="D37471">
    <property type="entry name" value="D37471"/>
</dbReference>
<dbReference type="PIR" id="E37471">
    <property type="entry name" value="E37471"/>
</dbReference>
<dbReference type="RefSeq" id="NP_056820.1">
    <property type="nucleotide sequence ID" value="NC_001959.2"/>
</dbReference>
<dbReference type="PDB" id="2FYQ">
    <property type="method" value="X-ray"/>
    <property type="resolution" value="1.50 A"/>
    <property type="chains" value="A=1101-1281"/>
</dbReference>
<dbReference type="PDB" id="2FYR">
    <property type="method" value="X-ray"/>
    <property type="resolution" value="2.20 A"/>
    <property type="chains" value="A=1101-1281"/>
</dbReference>
<dbReference type="PDB" id="2LNC">
    <property type="method" value="NMR"/>
    <property type="chains" value="A=1101-1281"/>
</dbReference>
<dbReference type="PDB" id="3UR6">
    <property type="method" value="X-ray"/>
    <property type="resolution" value="1.50 A"/>
    <property type="chains" value="A/B=1101-1281"/>
</dbReference>
<dbReference type="PDB" id="3UR9">
    <property type="method" value="X-ray"/>
    <property type="resolution" value="1.65 A"/>
    <property type="chains" value="A/B=1101-1281"/>
</dbReference>
<dbReference type="PDB" id="4IMQ">
    <property type="method" value="X-ray"/>
    <property type="resolution" value="1.50 A"/>
    <property type="chains" value="A=1101-1281"/>
</dbReference>
<dbReference type="PDB" id="4IMZ">
    <property type="method" value="X-ray"/>
    <property type="resolution" value="1.70 A"/>
    <property type="chains" value="A=1101-1281"/>
</dbReference>
<dbReference type="PDB" id="4IN1">
    <property type="method" value="X-ray"/>
    <property type="resolution" value="2.05 A"/>
    <property type="chains" value="A=1101-1281"/>
</dbReference>
<dbReference type="PDB" id="4IN2">
    <property type="method" value="X-ray"/>
    <property type="resolution" value="2.40 A"/>
    <property type="chains" value="A/B=1100-1281"/>
</dbReference>
<dbReference type="PDB" id="4INH">
    <property type="method" value="X-ray"/>
    <property type="resolution" value="1.70 A"/>
    <property type="chains" value="A/B/C/D/E/F/G/H=1101-1281"/>
</dbReference>
<dbReference type="PDB" id="4XBB">
    <property type="method" value="X-ray"/>
    <property type="resolution" value="1.85 A"/>
    <property type="chains" value="A=1101-1281"/>
</dbReference>
<dbReference type="PDB" id="4XBC">
    <property type="method" value="X-ray"/>
    <property type="resolution" value="1.60 A"/>
    <property type="chains" value="A=1101-1281"/>
</dbReference>
<dbReference type="PDB" id="4XBD">
    <property type="method" value="X-ray"/>
    <property type="resolution" value="1.45 A"/>
    <property type="chains" value="A/B=1101-1281"/>
</dbReference>
<dbReference type="PDB" id="5DG6">
    <property type="method" value="X-ray"/>
    <property type="resolution" value="2.35 A"/>
    <property type="chains" value="A/B=1101-1281"/>
</dbReference>
<dbReference type="PDB" id="5DGJ">
    <property type="method" value="X-ray"/>
    <property type="resolution" value="1.00 A"/>
    <property type="chains" value="A=1101-1281"/>
</dbReference>
<dbReference type="PDB" id="5E0G">
    <property type="method" value="X-ray"/>
    <property type="resolution" value="1.20 A"/>
    <property type="chains" value="A=1101-1281"/>
</dbReference>
<dbReference type="PDB" id="5E0H">
    <property type="method" value="X-ray"/>
    <property type="resolution" value="1.95 A"/>
    <property type="chains" value="A/B=1101-1281"/>
</dbReference>
<dbReference type="PDB" id="5E0J">
    <property type="method" value="X-ray"/>
    <property type="resolution" value="1.20 A"/>
    <property type="chains" value="A=1101-1281"/>
</dbReference>
<dbReference type="PDB" id="5T6D">
    <property type="method" value="X-ray"/>
    <property type="resolution" value="2.10 A"/>
    <property type="chains" value="A/B=1101-1281"/>
</dbReference>
<dbReference type="PDB" id="5T6F">
    <property type="method" value="X-ray"/>
    <property type="resolution" value="1.90 A"/>
    <property type="chains" value="A/B=1101-1281"/>
</dbReference>
<dbReference type="PDB" id="5T6G">
    <property type="method" value="X-ray"/>
    <property type="resolution" value="2.45 A"/>
    <property type="chains" value="A/B=1101-1281"/>
</dbReference>
<dbReference type="PDB" id="5TG1">
    <property type="method" value="X-ray"/>
    <property type="resolution" value="1.40 A"/>
    <property type="chains" value="A=1101-1281"/>
</dbReference>
<dbReference type="PDB" id="5TG2">
    <property type="method" value="X-ray"/>
    <property type="resolution" value="1.75 A"/>
    <property type="chains" value="A=1101-1281"/>
</dbReference>
<dbReference type="PDB" id="5WEJ">
    <property type="method" value="X-ray"/>
    <property type="resolution" value="1.95 A"/>
    <property type="chains" value="A/B=1101-1281"/>
</dbReference>
<dbReference type="PDB" id="6BIB">
    <property type="method" value="X-ray"/>
    <property type="resolution" value="1.95 A"/>
    <property type="chains" value="A/B=1101-1281"/>
</dbReference>
<dbReference type="PDB" id="6BIC">
    <property type="method" value="X-ray"/>
    <property type="resolution" value="2.25 A"/>
    <property type="chains" value="A/B=1101-1281"/>
</dbReference>
<dbReference type="PDB" id="6BID">
    <property type="method" value="X-ray"/>
    <property type="resolution" value="1.15 A"/>
    <property type="chains" value="A=1101-1281"/>
</dbReference>
<dbReference type="PDB" id="6W5H">
    <property type="method" value="X-ray"/>
    <property type="resolution" value="1.85 A"/>
    <property type="chains" value="A/B/C/D=1101-1281"/>
</dbReference>
<dbReference type="PDB" id="6W5J">
    <property type="method" value="X-ray"/>
    <property type="resolution" value="1.85 A"/>
    <property type="chains" value="A/B=1101-1281"/>
</dbReference>
<dbReference type="PDB" id="6W5K">
    <property type="method" value="X-ray"/>
    <property type="resolution" value="1.95 A"/>
    <property type="chains" value="A/B/C/D=1101-1281"/>
</dbReference>
<dbReference type="PDB" id="6W5L">
    <property type="method" value="X-ray"/>
    <property type="resolution" value="2.10 A"/>
    <property type="chains" value="A/B/C/D=1101-1281"/>
</dbReference>
<dbReference type="PDB" id="9D9Y">
    <property type="method" value="X-ray"/>
    <property type="resolution" value="1.80 A"/>
    <property type="chains" value="A/B=1101-1281"/>
</dbReference>
<dbReference type="PDBsum" id="2FYQ"/>
<dbReference type="PDBsum" id="2FYR"/>
<dbReference type="PDBsum" id="2LNC"/>
<dbReference type="PDBsum" id="3UR6"/>
<dbReference type="PDBsum" id="3UR9"/>
<dbReference type="PDBsum" id="4IMQ"/>
<dbReference type="PDBsum" id="4IMZ"/>
<dbReference type="PDBsum" id="4IN1"/>
<dbReference type="PDBsum" id="4IN2"/>
<dbReference type="PDBsum" id="4INH"/>
<dbReference type="PDBsum" id="4XBB"/>
<dbReference type="PDBsum" id="4XBC"/>
<dbReference type="PDBsum" id="4XBD"/>
<dbReference type="PDBsum" id="5DG6"/>
<dbReference type="PDBsum" id="5DGJ"/>
<dbReference type="PDBsum" id="5E0G"/>
<dbReference type="PDBsum" id="5E0H"/>
<dbReference type="PDBsum" id="5E0J"/>
<dbReference type="PDBsum" id="5T6D"/>
<dbReference type="PDBsum" id="5T6F"/>
<dbReference type="PDBsum" id="5T6G"/>
<dbReference type="PDBsum" id="5TG1"/>
<dbReference type="PDBsum" id="5TG2"/>
<dbReference type="PDBsum" id="5WEJ"/>
<dbReference type="PDBsum" id="6BIB"/>
<dbReference type="PDBsum" id="6BIC"/>
<dbReference type="PDBsum" id="6BID"/>
<dbReference type="PDBsum" id="6W5H"/>
<dbReference type="PDBsum" id="6W5J"/>
<dbReference type="PDBsum" id="6W5K"/>
<dbReference type="PDBsum" id="6W5L"/>
<dbReference type="PDBsum" id="9D9Y"/>
<dbReference type="BMRB" id="Q83883"/>
<dbReference type="SMR" id="Q83883"/>
<dbReference type="IntAct" id="Q83883">
    <property type="interactions" value="1"/>
</dbReference>
<dbReference type="BindingDB" id="Q83883"/>
<dbReference type="MEROPS" id="C37.001"/>
<dbReference type="GeneID" id="1491970"/>
<dbReference type="KEGG" id="vg:1491970"/>
<dbReference type="BRENDA" id="3.4.22.66">
    <property type="organism ID" value="8731"/>
</dbReference>
<dbReference type="EvolutionaryTrace" id="Q83883"/>
<dbReference type="Proteomes" id="UP000000826">
    <property type="component" value="Segment"/>
</dbReference>
<dbReference type="GO" id="GO:0005576">
    <property type="term" value="C:extracellular region"/>
    <property type="evidence" value="ECO:0007669"/>
    <property type="project" value="UniProtKB-SubCell"/>
</dbReference>
<dbReference type="GO" id="GO:0044167">
    <property type="term" value="C:host cell endoplasmic reticulum membrane"/>
    <property type="evidence" value="ECO:0007669"/>
    <property type="project" value="UniProtKB-SubCell"/>
</dbReference>
<dbReference type="GO" id="GO:0044178">
    <property type="term" value="C:host cell Golgi membrane"/>
    <property type="evidence" value="ECO:0007669"/>
    <property type="project" value="UniProtKB-SubCell"/>
</dbReference>
<dbReference type="GO" id="GO:0044220">
    <property type="term" value="C:host cell perinuclear region of cytoplasm"/>
    <property type="evidence" value="ECO:0007669"/>
    <property type="project" value="UniProtKB-SubCell"/>
</dbReference>
<dbReference type="GO" id="GO:0016020">
    <property type="term" value="C:membrane"/>
    <property type="evidence" value="ECO:0007669"/>
    <property type="project" value="UniProtKB-KW"/>
</dbReference>
<dbReference type="GO" id="GO:0005524">
    <property type="term" value="F:ATP binding"/>
    <property type="evidence" value="ECO:0007669"/>
    <property type="project" value="UniProtKB-KW"/>
</dbReference>
<dbReference type="GO" id="GO:0004197">
    <property type="term" value="F:cysteine-type endopeptidase activity"/>
    <property type="evidence" value="ECO:0007669"/>
    <property type="project" value="InterPro"/>
</dbReference>
<dbReference type="GO" id="GO:0046872">
    <property type="term" value="F:metal ion binding"/>
    <property type="evidence" value="ECO:0007669"/>
    <property type="project" value="UniProtKB-KW"/>
</dbReference>
<dbReference type="GO" id="GO:0017111">
    <property type="term" value="F:ribonucleoside triphosphate phosphatase activity"/>
    <property type="evidence" value="ECO:0007669"/>
    <property type="project" value="UniProtKB-EC"/>
</dbReference>
<dbReference type="GO" id="GO:0003723">
    <property type="term" value="F:RNA binding"/>
    <property type="evidence" value="ECO:0007669"/>
    <property type="project" value="InterPro"/>
</dbReference>
<dbReference type="GO" id="GO:0003724">
    <property type="term" value="F:RNA helicase activity"/>
    <property type="evidence" value="ECO:0007669"/>
    <property type="project" value="InterPro"/>
</dbReference>
<dbReference type="GO" id="GO:0003968">
    <property type="term" value="F:RNA-directed RNA polymerase activity"/>
    <property type="evidence" value="ECO:0007669"/>
    <property type="project" value="UniProtKB-KW"/>
</dbReference>
<dbReference type="GO" id="GO:0006351">
    <property type="term" value="P:DNA-templated transcription"/>
    <property type="evidence" value="ECO:0007669"/>
    <property type="project" value="InterPro"/>
</dbReference>
<dbReference type="GO" id="GO:0006508">
    <property type="term" value="P:proteolysis"/>
    <property type="evidence" value="ECO:0007669"/>
    <property type="project" value="UniProtKB-KW"/>
</dbReference>
<dbReference type="GO" id="GO:0039694">
    <property type="term" value="P:viral RNA genome replication"/>
    <property type="evidence" value="ECO:0007669"/>
    <property type="project" value="InterPro"/>
</dbReference>
<dbReference type="Gene3D" id="1.20.960.20">
    <property type="match status" value="1"/>
</dbReference>
<dbReference type="Gene3D" id="3.30.70.270">
    <property type="match status" value="2"/>
</dbReference>
<dbReference type="Gene3D" id="6.10.20.70">
    <property type="match status" value="1"/>
</dbReference>
<dbReference type="Gene3D" id="6.10.250.3230">
    <property type="match status" value="1"/>
</dbReference>
<dbReference type="Gene3D" id="3.40.50.300">
    <property type="entry name" value="P-loop containing nucleotide triphosphate hydrolases"/>
    <property type="match status" value="1"/>
</dbReference>
<dbReference type="Gene3D" id="2.40.10.10">
    <property type="entry name" value="Trypsin-like serine proteases"/>
    <property type="match status" value="2"/>
</dbReference>
<dbReference type="InterPro" id="IPR043502">
    <property type="entry name" value="DNA/RNA_pol_sf"/>
</dbReference>
<dbReference type="InterPro" id="IPR000605">
    <property type="entry name" value="Helicase_SF3_ssDNA/RNA_vir"/>
</dbReference>
<dbReference type="InterPro" id="IPR014759">
    <property type="entry name" value="Helicase_SF3_ssRNA_vir"/>
</dbReference>
<dbReference type="InterPro" id="IPR001665">
    <property type="entry name" value="Norovirus_pept_C37"/>
</dbReference>
<dbReference type="InterPro" id="IPR027417">
    <property type="entry name" value="P-loop_NTPase"/>
</dbReference>
<dbReference type="InterPro" id="IPR009003">
    <property type="entry name" value="Peptidase_S1_PA"/>
</dbReference>
<dbReference type="InterPro" id="IPR043504">
    <property type="entry name" value="Peptidase_S1_PA_chymotrypsin"/>
</dbReference>
<dbReference type="InterPro" id="IPR043128">
    <property type="entry name" value="Rev_trsase/Diguanyl_cyclase"/>
</dbReference>
<dbReference type="InterPro" id="IPR001205">
    <property type="entry name" value="RNA-dir_pol_C"/>
</dbReference>
<dbReference type="InterPro" id="IPR007094">
    <property type="entry name" value="RNA-dir_pol_PSvirus"/>
</dbReference>
<dbReference type="InterPro" id="IPR013614">
    <property type="entry name" value="Viral_PP_Calicivir_N"/>
</dbReference>
<dbReference type="Pfam" id="PF08405">
    <property type="entry name" value="Calici_PP_N"/>
    <property type="match status" value="1"/>
</dbReference>
<dbReference type="Pfam" id="PF05416">
    <property type="entry name" value="Peptidase_C37"/>
    <property type="match status" value="1"/>
</dbReference>
<dbReference type="Pfam" id="PF00680">
    <property type="entry name" value="RdRP_1"/>
    <property type="match status" value="1"/>
</dbReference>
<dbReference type="Pfam" id="PF00910">
    <property type="entry name" value="RNA_helicase"/>
    <property type="match status" value="1"/>
</dbReference>
<dbReference type="PRINTS" id="PR00917">
    <property type="entry name" value="SRSVCYSPTASE"/>
</dbReference>
<dbReference type="SUPFAM" id="SSF56672">
    <property type="entry name" value="DNA/RNA polymerases"/>
    <property type="match status" value="1"/>
</dbReference>
<dbReference type="SUPFAM" id="SSF52540">
    <property type="entry name" value="P-loop containing nucleoside triphosphate hydrolases"/>
    <property type="match status" value="1"/>
</dbReference>
<dbReference type="SUPFAM" id="SSF50494">
    <property type="entry name" value="Trypsin-like serine proteases"/>
    <property type="match status" value="1"/>
</dbReference>
<dbReference type="PROSITE" id="PS51537">
    <property type="entry name" value="NV_3CL_PRO"/>
    <property type="match status" value="1"/>
</dbReference>
<dbReference type="PROSITE" id="PS50507">
    <property type="entry name" value="RDRP_SSRNA_POS"/>
    <property type="match status" value="1"/>
</dbReference>
<dbReference type="PROSITE" id="PS51218">
    <property type="entry name" value="SF3_HELICASE_2"/>
    <property type="match status" value="1"/>
</dbReference>
<comment type="function">
    <molecule>NS1-2</molecule>
    <text evidence="2 13 28">Induces the proliferation of the host smooth ER membranes forming long tubular structures (By similarity). These remodeled membranes probably form the viral factories that contain the replication complex (By similarity). Induces the disassembly of host Golgi (PubMed:15078964). May play a role in viral replication by interacting with host VAPA, a vesicle-associated membrane protein that plays a role in SNARE-mediated vesicle fusion. This interaction may target replication complex to intracellular membranes (Probable).</text>
</comment>
<comment type="function">
    <molecule>NTPase</molecule>
    <text evidence="2 5 24">Displays NTPase activity and RNA helix-unwinding activity (PubMed:29237842). Displays RNA chaperone-like activity and destabilizes dsRNA (PubMed:29237842). Induces the formation of convoluted membranes derived from the host ER (By similarity). These remodeled membranes probably form the viral factories that contain the replication complex (By similarity). Initiates host cell death by targeting the mitochondrial outer membrane, leading to the permeabilization of mitochondria, programmed host cell death and viral egress (By similarity). Probably plays a role in preventing the assembly of host stress granules (By similarity).</text>
</comment>
<comment type="function">
    <molecule>NS4</molecule>
    <text evidence="2 16">Probable key protein responsible for the formation of membrane alterations by the virus (By similarity). Induces the formation of convoluted membranes derived from the host ER (By similarity). These remodeled membranes probably form the viral factories that contain the replication complex (By similarity). May play a role in targeting replication complex to intracellular membranes. Induces the disassembly of host Golgi and antagonism of Golgi-dependent cellular protein secretion, probably via the mislocalization of COPII-coated vesicles (PubMed:20976190).</text>
</comment>
<comment type="function">
    <molecule>Viral genome-linked protein</molecule>
    <text evidence="1 5">Viral genome-linked protein is covalently linked to the 5'-end of the positive-strand, negative-strand genomic RNAs and subgenomic RNA (By similarity). Acts as a genome-linked replication primer (By similarity). May recruit ribosome to viral RNA thereby promoting viral proteins translation (By similarity). Interacts with host translation initiation complex to allow the translation of viral proteins (By similarity). Induces the formation of aggregates of RNA-directed RNA polymerase in the presence of RNA (By similarity). Through its interaction with the viral RNA-directed RNA polymerase, plays a crucial role in enhancing the polymerase activity (By similarity).</text>
</comment>
<comment type="function">
    <molecule>3C-like protease</molecule>
    <text evidence="15 27">Processes the polyprotein. 3CLpro-RdRp is first released by autocleavage, then all other proteins are cleaved (PubMed:17554035). May cleave host polyadenylate-binding protein thereby inhibiting cellular translation (Probable).</text>
</comment>
<comment type="function">
    <molecule>RNA-directed RNA polymerase</molecule>
    <text evidence="6">Replicates genomic and antigenomic RNA by recognizing replications specific signals. Also transcribes a subgenomic mRNA by initiating RNA synthesis internally on antigenomic RNA. This sgRNA codes for structural proteins. Catalyzes the covalent attachment VPg with viral RNAs (By similarity).</text>
</comment>
<comment type="catalytic activity">
    <molecule>NTPase</molecule>
    <reaction evidence="24">
        <text>a ribonucleoside 5'-triphosphate + H2O = a ribonucleoside 5'-diphosphate + phosphate + H(+)</text>
        <dbReference type="Rhea" id="RHEA:23680"/>
        <dbReference type="ChEBI" id="CHEBI:15377"/>
        <dbReference type="ChEBI" id="CHEBI:15378"/>
        <dbReference type="ChEBI" id="CHEBI:43474"/>
        <dbReference type="ChEBI" id="CHEBI:57930"/>
        <dbReference type="ChEBI" id="CHEBI:61557"/>
        <dbReference type="EC" id="3.6.1.15"/>
    </reaction>
</comment>
<comment type="catalytic activity">
    <molecule>3C-like protease</molecule>
    <reaction evidence="9 14 17">
        <text>Endopeptidase with a preference for cleavage when the P1 position is occupied by Glu-|-Xaa and the P1' position is occupied by Gly-|-Yaa.</text>
        <dbReference type="EC" id="3.4.22.66"/>
    </reaction>
</comment>
<comment type="catalytic activity">
    <molecule>RNA-directed RNA polymerase</molecule>
    <reaction evidence="7">
        <text>RNA(n) + a ribonucleoside 5'-triphosphate = RNA(n+1) + diphosphate</text>
        <dbReference type="Rhea" id="RHEA:21248"/>
        <dbReference type="Rhea" id="RHEA-COMP:14527"/>
        <dbReference type="Rhea" id="RHEA-COMP:17342"/>
        <dbReference type="ChEBI" id="CHEBI:33019"/>
        <dbReference type="ChEBI" id="CHEBI:61557"/>
        <dbReference type="ChEBI" id="CHEBI:140395"/>
        <dbReference type="EC" id="2.7.7.48"/>
    </reaction>
</comment>
<comment type="cofactor">
    <molecule>NTPase</molecule>
    <cofactor evidence="4">
        <name>Mg(2+)</name>
        <dbReference type="ChEBI" id="CHEBI:18420"/>
    </cofactor>
</comment>
<comment type="cofactor">
    <molecule>RNA-directed RNA polymerase</molecule>
    <cofactor evidence="24">
        <name>Mg(2+)</name>
        <dbReference type="ChEBI" id="CHEBI:18420"/>
    </cofactor>
    <cofactor evidence="5">
        <name>Mn(2+)</name>
        <dbReference type="ChEBI" id="CHEBI:29035"/>
    </cofactor>
</comment>
<comment type="activity regulation">
    <molecule>3C-like protease</molecule>
    <text evidence="17 21 22 23 25">Inhibited by the chemical compound K36/GC376, which covalently binds to the nucleophilic cysteine residue (PubMed:22915796). Inhibited by various macrocyclic inhibitors (PubMed:26823007, PubMed:27235842, PubMed:28038326, PubMed:30883881).</text>
</comment>
<comment type="activity regulation">
    <molecule>NTPase</molecule>
    <text evidence="24">Inhibited by the guanidine salt GuHCl.</text>
</comment>
<comment type="biophysicochemical properties">
    <molecule>NTPase</molecule>
    <phDependence>
        <text evidence="24">Optimum pH is 7.6.</text>
    </phDependence>
</comment>
<comment type="subunit">
    <molecule>NS1-2</molecule>
    <text evidence="2 12">Homodimer (By similarity). Homooligomer (By similarity). Interacts with NTPase; this interaction increases the proapoptotic activity of the NTPase and is crucial for the formation of the viral replication complex (By similarity). Interacts with NS4; this interaction is crucial for the formation of the viral replication complex (By similarity). Interacts (via N-terminus) with host VAPA (PubMed:14557663). Interacts with host MAP1LC3A/LC3; this interaction does not seem to be linked to host autophagy, but rather plays a role in the formation of viral factories (By similarity).</text>
</comment>
<comment type="subunit">
    <molecule>NTPase</molecule>
    <text evidence="2 5">Homooligomer (By similarity). Interacts with NS1-2; this interaction increases the proapoptotic activity of the NTPase and is crucial for the formation of the viral replication complex (By similarity). Interacts with NS4; this interaction increases the proapoptotic activity of the NTPase (By similarity).</text>
</comment>
<comment type="subunit">
    <molecule>3C-like protease</molecule>
    <text evidence="14 18">Homodimer (PubMed:16641296). Monomer; in solution (PubMed:23319456).</text>
</comment>
<comment type="subunit">
    <molecule>NS4</molecule>
    <text evidence="2">Interacts with NTPase; this interaction increases the proapoptotic activity of the NTPase (By similarity). Interacts with NS1-2; this interaction is crucial for the formation of the viral replication complex (By similarity).</text>
</comment>
<comment type="subunit">
    <molecule>Viral genome-linked protein</molecule>
    <text evidence="2 5">Monomer (By similarity). Interacts with the RNA-directed RNA polymerase; this interaction induces the multimerization of the RdRp and enhances its activity (By similarity). Interacts with host IEF4G1; this interaction plays a role in translation of viral proteins (By similarity).</text>
</comment>
<comment type="subunit">
    <molecule>RNA-directed RNA polymerase</molecule>
    <text evidence="5">Homohexamer; also forms fibrous hexameric oligomer (By similarity). Interacts with the viral genome-linked protein; this interaction induces the multimerization of the RdRp and enhances its activity (By similarity).</text>
</comment>
<comment type="subcellular location">
    <molecule>NS1-2</molecule>
    <subcellularLocation>
        <location evidence="29">Host Golgi apparatus membrane</location>
    </subcellularLocation>
</comment>
<comment type="subcellular location">
    <molecule>NS1</molecule>
    <subcellularLocation>
        <location evidence="3">Secreted</location>
    </subcellularLocation>
    <text evidence="3">Secreted through an unconventional CASP3-mediated mechanism.</text>
</comment>
<comment type="subcellular location">
    <molecule>NTPase</molecule>
    <subcellularLocation>
        <location evidence="2">Host endoplasmic reticulum membrane</location>
    </subcellularLocation>
</comment>
<comment type="subcellular location">
    <molecule>NS4</molecule>
    <subcellularLocation>
        <location evidence="2">Host endoplasmic reticulum membrane</location>
    </subcellularLocation>
    <subcellularLocation>
        <location evidence="16">Host Golgi apparatus membrane</location>
    </subcellularLocation>
</comment>
<comment type="subcellular location">
    <molecule>RNA-directed RNA polymerase</molecule>
    <subcellularLocation>
        <location evidence="5">Host cytoplasm</location>
        <location evidence="5">Host perinuclear region</location>
    </subcellularLocation>
</comment>
<comment type="domain">
    <molecule>NS1-2</molecule>
    <text evidence="2">Contains a disordered region in the N-terminus, a putative hydrolase in the central part, and probably a membrane-targeting domain in the C-terminus.</text>
</comment>
<comment type="domain">
    <molecule>NTPase</molecule>
    <text evidence="2 5">Contains a four-helix bundle domain (4HB) membrane-disruption domain in the N-terminus (By similarity). The N-terminus is involved in vesicle formation and ER localization (By similarity). Contains a mitochondrial localization signal in the C-terminus (By similarity). The N-terminus is involved in host cell death and viral egress (By similarity).</text>
</comment>
<comment type="domain">
    <molecule>NS4</molecule>
    <text evidence="16">Contains a motif that mimics a di-acidic endoplasmic reticulum export signal.</text>
</comment>
<comment type="PTM">
    <molecule>Genome polyprotein</molecule>
    <text evidence="9 15 20">Specific enzymatic cleavages in vivo yield mature proteins (PubMed:24991013). 3CLpro is first autocatalytically cleaved, then processes the whole polyprotein (By similarity) (PubMed:17554035, PubMed:24991013). NS1/2-3 and NS3-4 sites are cleaved rapidly and NS4-5, NS5-6, and NS6-7 sites are processed subsequently and less efficiently (PubMed:24991013).</text>
</comment>
<comment type="PTM">
    <molecule>Viral genome-linked protein</molecule>
    <text evidence="2">VPg is uridylylated by the polymerase and is covalently attached to the 5'-end of the polyadenylated genomic and subgenomic RNAs. This uridylylated form acts as a nucleotide-peptide primer for the polymerase.</text>
</comment>
<comment type="PTM">
    <molecule>NS1-2</molecule>
    <text evidence="5 26">Cleaved by host CASP3/caspase 3 at 18-22 h.p.i (PubMed:31130511). The cleavage allows NS1 secretion, which is essential for intestinal infection and resistance to IFN-lambda (By similarity).</text>
</comment>
<gene>
    <name type="ORF">ORF1</name>
</gene>
<organism>
    <name type="scientific">Norovirus (strain Human/NoV/United States/Norwalk/1968/GI)</name>
    <name type="common">Hu/NV/NV/1968/US</name>
    <dbReference type="NCBI Taxonomy" id="524364"/>
    <lineage>
        <taxon>Viruses</taxon>
        <taxon>Riboviria</taxon>
        <taxon>Orthornavirae</taxon>
        <taxon>Pisuviricota</taxon>
        <taxon>Pisoniviricetes</taxon>
        <taxon>Picornavirales</taxon>
        <taxon>Caliciviridae</taxon>
        <taxon>Norovirus</taxon>
        <taxon>Norwalk virus</taxon>
    </lineage>
</organism>
<proteinExistence type="evidence at protein level"/>
<organismHost>
    <name type="scientific">Homo sapiens</name>
    <name type="common">Human</name>
    <dbReference type="NCBI Taxonomy" id="9606"/>
</organismHost>
<protein>
    <recommendedName>
        <fullName>Genome polyprotein</fullName>
    </recommendedName>
    <component>
        <recommendedName>
            <fullName evidence="2">NS1-2</fullName>
        </recommendedName>
        <alternativeName>
            <fullName>NS1.2</fullName>
        </alternativeName>
        <alternativeName>
            <fullName evidence="27">NS1/2</fullName>
        </alternativeName>
        <alternativeName>
            <fullName>Protein p48</fullName>
        </alternativeName>
    </component>
    <component>
        <recommendedName>
            <fullName>NS1</fullName>
        </recommendedName>
    </component>
    <component>
        <recommendedName>
            <fullName>NS2</fullName>
        </recommendedName>
    </component>
    <component>
        <recommendedName>
            <fullName>NTPase</fullName>
            <ecNumber evidence="24">3.6.1.15</ecNumber>
        </recommendedName>
        <alternativeName>
            <fullName evidence="27">NS3</fullName>
        </alternativeName>
        <alternativeName>
            <fullName>p40</fullName>
        </alternativeName>
    </component>
    <component>
        <recommendedName>
            <fullName evidence="27">NS4</fullName>
        </recommendedName>
        <alternativeName>
            <fullName>Protein p22</fullName>
        </alternativeName>
    </component>
    <component>
        <recommendedName>
            <fullName>Viral genome-linked protein</fullName>
            <shortName>VPg</shortName>
        </recommendedName>
        <alternativeName>
            <fullName evidence="27">NS5</fullName>
        </alternativeName>
    </component>
    <component>
        <recommendedName>
            <fullName>3C-like protease</fullName>
            <shortName>3CLpro</shortName>
            <ecNumber evidence="14 17">3.4.22.66</ecNumber>
        </recommendedName>
        <alternativeName>
            <fullName>Calicivirin</fullName>
        </alternativeName>
        <alternativeName>
            <fullName evidence="27">NS6</fullName>
        </alternativeName>
    </component>
    <component>
        <recommendedName>
            <fullName>RNA-directed RNA polymerase</fullName>
            <shortName>RdRp</shortName>
            <ecNumber evidence="5">2.7.7.48</ecNumber>
        </recommendedName>
        <alternativeName>
            <fullName evidence="27">NS7</fullName>
        </alternativeName>
    </component>
</protein>
<accession>Q83883</accession>
<evidence type="ECO:0000250" key="1">
    <source>
        <dbReference type="UniProtKB" id="P27409"/>
    </source>
</evidence>
<evidence type="ECO:0000250" key="2">
    <source>
        <dbReference type="UniProtKB" id="P54634"/>
    </source>
</evidence>
<evidence type="ECO:0000250" key="3">
    <source>
        <dbReference type="UniProtKB" id="P63073"/>
    </source>
</evidence>
<evidence type="ECO:0000250" key="4">
    <source>
        <dbReference type="UniProtKB" id="Q04544"/>
    </source>
</evidence>
<evidence type="ECO:0000250" key="5">
    <source>
        <dbReference type="UniProtKB" id="Q80J95"/>
    </source>
</evidence>
<evidence type="ECO:0000250" key="6">
    <source>
        <dbReference type="UniProtKB" id="Q86119"/>
    </source>
</evidence>
<evidence type="ECO:0000255" key="7">
    <source>
        <dbReference type="PROSITE-ProRule" id="PRU00539"/>
    </source>
</evidence>
<evidence type="ECO:0000255" key="8">
    <source>
        <dbReference type="PROSITE-ProRule" id="PRU00551"/>
    </source>
</evidence>
<evidence type="ECO:0000255" key="9">
    <source>
        <dbReference type="PROSITE-ProRule" id="PRU00870"/>
    </source>
</evidence>
<evidence type="ECO:0000256" key="10">
    <source>
        <dbReference type="SAM" id="MobiDB-lite"/>
    </source>
</evidence>
<evidence type="ECO:0000269" key="11">
    <source>
    </source>
</evidence>
<evidence type="ECO:0000269" key="12">
    <source>
    </source>
</evidence>
<evidence type="ECO:0000269" key="13">
    <source>
    </source>
</evidence>
<evidence type="ECO:0000269" key="14">
    <source>
    </source>
</evidence>
<evidence type="ECO:0000269" key="15">
    <source>
    </source>
</evidence>
<evidence type="ECO:0000269" key="16">
    <source>
    </source>
</evidence>
<evidence type="ECO:0000269" key="17">
    <source>
    </source>
</evidence>
<evidence type="ECO:0000269" key="18">
    <source>
    </source>
</evidence>
<evidence type="ECO:0000269" key="19">
    <source>
    </source>
</evidence>
<evidence type="ECO:0000269" key="20">
    <source>
    </source>
</evidence>
<evidence type="ECO:0000269" key="21">
    <source>
    </source>
</evidence>
<evidence type="ECO:0000269" key="22">
    <source>
    </source>
</evidence>
<evidence type="ECO:0000269" key="23">
    <source>
    </source>
</evidence>
<evidence type="ECO:0000269" key="24">
    <source>
    </source>
</evidence>
<evidence type="ECO:0000269" key="25">
    <source>
    </source>
</evidence>
<evidence type="ECO:0000269" key="26">
    <source>
    </source>
</evidence>
<evidence type="ECO:0000305" key="27"/>
<evidence type="ECO:0000305" key="28">
    <source>
    </source>
</evidence>
<evidence type="ECO:0000305" key="29">
    <source>
    </source>
</evidence>
<evidence type="ECO:0000305" key="30">
    <source>
    </source>
</evidence>
<evidence type="ECO:0000305" key="31">
    <source>
    </source>
</evidence>
<evidence type="ECO:0007744" key="32">
    <source>
        <dbReference type="PDB" id="2FYQ"/>
    </source>
</evidence>
<evidence type="ECO:0007744" key="33">
    <source>
        <dbReference type="PDB" id="2FYR"/>
    </source>
</evidence>
<evidence type="ECO:0007744" key="34">
    <source>
        <dbReference type="PDB" id="2LNC"/>
    </source>
</evidence>
<evidence type="ECO:0007744" key="35">
    <source>
        <dbReference type="PDB" id="3UR6"/>
    </source>
</evidence>
<evidence type="ECO:0007744" key="36">
    <source>
        <dbReference type="PDB" id="3UR9"/>
    </source>
</evidence>
<evidence type="ECO:0007744" key="37">
    <source>
        <dbReference type="PDB" id="4IMQ"/>
    </source>
</evidence>
<evidence type="ECO:0007744" key="38">
    <source>
        <dbReference type="PDB" id="4IMZ"/>
    </source>
</evidence>
<evidence type="ECO:0007744" key="39">
    <source>
        <dbReference type="PDB" id="4IN1"/>
    </source>
</evidence>
<evidence type="ECO:0007744" key="40">
    <source>
        <dbReference type="PDB" id="4IN2"/>
    </source>
</evidence>
<evidence type="ECO:0007744" key="41">
    <source>
        <dbReference type="PDB" id="4INH"/>
    </source>
</evidence>
<evidence type="ECO:0007744" key="42">
    <source>
        <dbReference type="PDB" id="4XBB"/>
    </source>
</evidence>
<evidence type="ECO:0007744" key="43">
    <source>
        <dbReference type="PDB" id="4XBC"/>
    </source>
</evidence>
<evidence type="ECO:0007744" key="44">
    <source>
        <dbReference type="PDB" id="4XBD"/>
    </source>
</evidence>
<evidence type="ECO:0007744" key="45">
    <source>
        <dbReference type="PDB" id="5DG6"/>
    </source>
</evidence>
<evidence type="ECO:0007744" key="46">
    <source>
        <dbReference type="PDB" id="5DGJ"/>
    </source>
</evidence>
<evidence type="ECO:0007744" key="47">
    <source>
        <dbReference type="PDB" id="5E0G"/>
    </source>
</evidence>
<evidence type="ECO:0007744" key="48">
    <source>
        <dbReference type="PDB" id="5E0H"/>
    </source>
</evidence>
<evidence type="ECO:0007744" key="49">
    <source>
        <dbReference type="PDB" id="5E0J"/>
    </source>
</evidence>
<evidence type="ECO:0007744" key="50">
    <source>
        <dbReference type="PDB" id="5T6D"/>
    </source>
</evidence>
<evidence type="ECO:0007744" key="51">
    <source>
        <dbReference type="PDB" id="5T6F"/>
    </source>
</evidence>
<evidence type="ECO:0007744" key="52">
    <source>
        <dbReference type="PDB" id="5T6G"/>
    </source>
</evidence>
<evidence type="ECO:0007744" key="53">
    <source>
        <dbReference type="PDB" id="5TG1"/>
    </source>
</evidence>
<evidence type="ECO:0007744" key="54">
    <source>
        <dbReference type="PDB" id="5TG2"/>
    </source>
</evidence>
<evidence type="ECO:0007744" key="55">
    <source>
        <dbReference type="PDB" id="5WEJ"/>
    </source>
</evidence>
<evidence type="ECO:0007744" key="56">
    <source>
        <dbReference type="PDB" id="6BIB"/>
    </source>
</evidence>
<evidence type="ECO:0007744" key="57">
    <source>
        <dbReference type="PDB" id="6BIC"/>
    </source>
</evidence>
<evidence type="ECO:0007744" key="58">
    <source>
        <dbReference type="PDB" id="6BID"/>
    </source>
</evidence>
<evidence type="ECO:0007744" key="59">
    <source>
        <dbReference type="PDB" id="6W5H"/>
    </source>
</evidence>
<evidence type="ECO:0007744" key="60">
    <source>
        <dbReference type="PDB" id="6W5J"/>
    </source>
</evidence>
<evidence type="ECO:0007744" key="61">
    <source>
        <dbReference type="PDB" id="6W5K"/>
    </source>
</evidence>
<evidence type="ECO:0007744" key="62">
    <source>
        <dbReference type="PDB" id="6W5L"/>
    </source>
</evidence>
<evidence type="ECO:0007829" key="63">
    <source>
        <dbReference type="PDB" id="2LNC"/>
    </source>
</evidence>
<evidence type="ECO:0007829" key="64">
    <source>
        <dbReference type="PDB" id="4IN2"/>
    </source>
</evidence>
<evidence type="ECO:0007829" key="65">
    <source>
        <dbReference type="PDB" id="5DGJ"/>
    </source>
</evidence>
<evidence type="ECO:0007829" key="66">
    <source>
        <dbReference type="PDB" id="5E0J"/>
    </source>
</evidence>
<evidence type="ECO:0007829" key="67">
    <source>
        <dbReference type="PDB" id="5TG1"/>
    </source>
</evidence>
<evidence type="ECO:0007829" key="68">
    <source>
        <dbReference type="PDB" id="6BID"/>
    </source>
</evidence>
<reference key="1">
    <citation type="journal article" date="1993" name="Virology">
        <title>Sequence and genomic organization of Norwalk virus.</title>
        <authorList>
            <person name="Jiang X."/>
            <person name="Wang M."/>
            <person name="Wang K."/>
            <person name="Estes M.K."/>
        </authorList>
    </citation>
    <scope>NUCLEOTIDE SEQUENCE [GENOMIC RNA] OF 3-1789</scope>
</reference>
<reference key="2">
    <citation type="journal article" date="1996" name="Virus Genes">
        <title>Completion of the Norwalk virus genome sequence.</title>
        <authorList>
            <person name="Hardy M.E."/>
            <person name="Estes M.K."/>
        </authorList>
    </citation>
    <scope>NUCLEOTIDE SEQUENCE [GENOMIC RNA] OF 1-3</scope>
</reference>
<reference key="3">
    <citation type="journal article" date="2002" name="Virus Res.">
        <title>Substrate specificity of the Norwalk virus 3C-like proteinase.</title>
        <authorList>
            <person name="Hardy M.E."/>
            <person name="Crone T.J."/>
            <person name="Brower J.E."/>
            <person name="Ettayebi K."/>
        </authorList>
    </citation>
    <scope>MUTAGENESIS OF ASP-394; PHE-395; GLN-398; GLY-399; GLU-1154; ASP-1167 AND GLU-1281</scope>
</reference>
<reference key="4">
    <citation type="journal article" date="2003" name="J. Virol.">
        <title>Norwalk virus nonstructural protein p48 forms a complex with the SNARE regulator VAP-A and prevents cell surface expression of vesicular stomatitis virus G protein.</title>
        <authorList>
            <person name="Ettayebi K."/>
            <person name="Hardy M.E."/>
        </authorList>
    </citation>
    <scope>INTERACTION WITH HUMAN VAPA (NS1-2)</scope>
    <scope>FUNCTION (NS1-2)</scope>
</reference>
<reference key="5">
    <citation type="journal article" date="2004" name="J. Virol.">
        <title>Norwalk virus N-terminal nonstructural protein is associated with disassembly of the Golgi complex in transfected cells.</title>
        <authorList>
            <person name="Fernandez-Vega V."/>
            <person name="Sosnovtsev S.V."/>
            <person name="Belliot G."/>
            <person name="King A.D."/>
            <person name="Mitra T."/>
            <person name="Gorbalenya A."/>
            <person name="Green K.Y."/>
        </authorList>
    </citation>
    <scope>SUBCELLULAR LOCATION (NS1-2)</scope>
    <scope>FUNCTION (NS1-2)</scope>
</reference>
<reference key="6">
    <citation type="journal article" date="2007" name="J. Gen. Virol.">
        <title>Differential cleavage of the norovirus polyprotein precursor by two active forms of the viral protease.</title>
        <authorList>
            <person name="Scheffler U."/>
            <person name="Rudolph W."/>
            <person name="Gebhardt J."/>
            <person name="Rohayem J."/>
        </authorList>
    </citation>
    <scope>PROTEOLYTIC PROCESSING (GENOME POLYPROTEIN)</scope>
    <scope>FUNCTION (3C-LIKE PROTEASE)</scope>
    <source>
        <strain>Norovirus GE/Human/Germany/NLV/Dresden174/pUS-NorII/1997</strain>
    </source>
</reference>
<reference key="7">
    <citation type="journal article" date="2005" name="FEMS Microbiol. Lett.">
        <title>Norovirus protein structure and function.</title>
        <authorList>
            <person name="Hardy M.E."/>
        </authorList>
    </citation>
    <scope>REVIEW</scope>
</reference>
<reference key="8">
    <citation type="journal article" date="2010" name="PLoS ONE">
        <title>Inhibition of cellular protein secretion by norwalk virus nonstructural protein p22 requires a mimic of an endoplasmic reticulum export signal.</title>
        <authorList>
            <person name="Sharp T.M."/>
            <person name="Guix S."/>
            <person name="Katayama K."/>
            <person name="Crawford S.E."/>
            <person name="Estes M.K."/>
        </authorList>
    </citation>
    <scope>FUNCTION (NS4)</scope>
    <scope>DOMAIN (NS4)</scope>
    <scope>SUBCELLULAR LOCATION (NS4)</scope>
    <scope>MUTAGENESIS OF TYR-826 AND GLU-829</scope>
</reference>
<reference key="9">
    <citation type="journal article" date="2014" name="J. Virol.">
        <title>The p4-p2' amino acids surrounding human norovirus polyprotein cleavage sites define the core sequence regulating self-processing order.</title>
        <authorList>
            <person name="May J."/>
            <person name="Viswanathan P."/>
            <person name="Ng K.K."/>
            <person name="Medvedev A."/>
            <person name="Korba B."/>
        </authorList>
    </citation>
    <scope>PROTEOLYTIC CLEAVAGE (GENOME POLYPROTEIN)</scope>
</reference>
<reference key="10">
    <citation type="journal article" date="2018" name="J. Virol.">
        <title>Human Norovirus NS3 Has RNA Helicase and Chaperoning Activities.</title>
        <authorList>
            <person name="Li T.F."/>
            <person name="Hosmillo M."/>
            <person name="Schwanke H."/>
            <person name="Shu T."/>
            <person name="Wang Z."/>
            <person name="Yin L."/>
            <person name="Curry S."/>
            <person name="Goodfellow I.G."/>
            <person name="Zhou X."/>
        </authorList>
    </citation>
    <scope>CATALYTIC ACTIVITY (NTPASE)</scope>
    <scope>FUNCTION (NTPASE)</scope>
    <scope>COFACTOR (NTPASE)</scope>
    <scope>BIOPHYSICOCHEMICAL PROPERTIES (NTPASE)</scope>
    <scope>MUTAGENESIS OF 565-GLY-LYS-566 AND 610-ASP-ASP-611</scope>
    <scope>ACTIVITY REGULATION (NTPASE)</scope>
    <source>
        <strain>Norovirus GI.1/Human/United States/CHA7A011/2010</strain>
    </source>
</reference>
<reference key="11">
    <citation type="journal article" date="2019" name="Cell Host Microbe">
        <title>A Secreted Viral Nonstructural Protein Determines Intestinal Norovirus Pathogenesis.</title>
        <authorList>
            <person name="Lee S."/>
            <person name="Liu H."/>
            <person name="Wilen C.B."/>
            <person name="Sychev Z.E."/>
            <person name="Desai C."/>
            <person name="Hykes B.L. Jr."/>
            <person name="Orchard R.C."/>
            <person name="McCune B.T."/>
            <person name="Kim K.W."/>
            <person name="Nice T.J."/>
            <person name="Handley S.A."/>
            <person name="Baldridge M.T."/>
            <person name="Amarasinghe G.K."/>
            <person name="Virgin H.W."/>
        </authorList>
    </citation>
    <scope>PROTEOLYTIC CLEAVAGE (NS1-2)</scope>
    <source>
        <strain>CR6</strain>
    </source>
</reference>
<reference key="12">
    <citation type="journal article" date="2021" name="Front. Microbiol.">
        <title>Calicivirus Non-structural Proteins: Potential Functions in Replication and Host Cell Manipulation.</title>
        <authorList>
            <person name="Smertina E."/>
            <person name="Hall R.N."/>
            <person name="Urakova N."/>
            <person name="Strive T."/>
            <person name="Frese M."/>
        </authorList>
    </citation>
    <scope>REVIEW</scope>
</reference>
<reference evidence="32 33" key="13">
    <citation type="journal article" date="2006" name="J. Virol.">
        <title>X-ray crystallographic structure of the Norwalk virus protease at 1.5-A resolution.</title>
        <authorList>
            <person name="Zeitler C.E."/>
            <person name="Estes M.K."/>
            <person name="Venkataram Prasad B.V."/>
        </authorList>
    </citation>
    <scope>X-RAY CRYSTALLOGRAPHY (1.5 ANGSTROMS) OF 1100-1281</scope>
    <scope>ACTIVE SITE (3C-LIKE PROTEASE)</scope>
    <scope>MUTAGENESIS OF GLU-1154</scope>
    <scope>SUBUNIT (3C-LIKE PROTEASE)</scope>
    <scope>CATALYTIC ACTIVITY (3C-LIKE PROTEASE)</scope>
</reference>
<reference evidence="35 36" key="14">
    <citation type="journal article" date="2012" name="J. Virol.">
        <title>Broad-spectrum antivirals against 3C or 3C-like proteases of picornaviruses, noroviruses, and coronaviruses.</title>
        <authorList>
            <person name="Kim Y."/>
            <person name="Lovell S."/>
            <person name="Tiew K.C."/>
            <person name="Mandadapu S.R."/>
            <person name="Alliston K.R."/>
            <person name="Battaile K.P."/>
            <person name="Groutas W.C."/>
            <person name="Chang K.O."/>
        </authorList>
    </citation>
    <scope>X-RAY CRYSTALLOGRAPHY (1.50 ANGSTROMS) OF 1101-1281 IN COMPLEX WITH K36/GC376</scope>
    <scope>ACTIVITY REGULATION (3C-LIKE PROTEASE)</scope>
    <scope>CATALYTIC ACTIVITY (3C-LIKE PROTEASE)</scope>
    <source>
        <strain>Hu/NV/NV/1968/US</strain>
    </source>
</reference>
<reference evidence="37 38 39 40 41" key="15">
    <citation type="journal article" date="2013" name="J. Virol.">
        <title>Structural basis of substrate specificity and protease inhibition in Norwalk virus.</title>
        <authorList>
            <person name="Muhaxhiri Z."/>
            <person name="Deng L."/>
            <person name="Shanker S."/>
            <person name="Sankaran B."/>
            <person name="Estes M.K."/>
            <person name="Palzkill T."/>
            <person name="Song Y."/>
            <person name="Prasad B.V."/>
        </authorList>
    </citation>
    <scope>X-RAY CRYSTALLOGRAPHY (1.50 ANGSTROMS) OF 1101-1281 IN COMPLEX WITH SUBSTRATE</scope>
    <scope>ACTIVE SITE (3C-LIKE PROTEASE)</scope>
    <scope>MUTAGENESIS OF CYS-1239</scope>
</reference>
<reference evidence="34" key="16">
    <citation type="journal article" date="2013" name="Protein Sci.">
        <title>Structural and dynamics characterization of norovirus protease.</title>
        <authorList>
            <person name="Takahashi D."/>
            <person name="Hiromasa Y."/>
            <person name="Kim Y."/>
            <person name="Anbanandam A."/>
            <person name="Yao X."/>
            <person name="Chang K.O."/>
            <person name="Prakash O."/>
        </authorList>
    </citation>
    <scope>STRUCTURE BY NMR OF 1101-1281</scope>
    <scope>SUBUNIT (3C-LIKE PROTEASE)</scope>
</reference>
<reference evidence="42 43 44" key="17">
    <citation type="journal article" date="2015" name="J. Med. Chem.">
        <title>Structure-guided design and optimization of dipeptidyl inhibitors of norovirus 3CL protease. Structure-activity relationships and biochemical, X-ray crystallographic, cell-based, and in vivo studies.</title>
        <authorList>
            <person name="Galasiti Kankanamalage A.C."/>
            <person name="Kim Y."/>
            <person name="Weerawarna P.M."/>
            <person name="Uy R.A."/>
            <person name="Damalanka V.C."/>
            <person name="Mandadapu S.R."/>
            <person name="Alliston K.R."/>
            <person name="Mehzabeen N."/>
            <person name="Battaile K.P."/>
            <person name="Lovell S."/>
            <person name="Chang K.O."/>
            <person name="Groutas W.C."/>
        </authorList>
    </citation>
    <scope>X-RAY CRYSTALLOGRAPHY (1.45 ANGSTROMS) OF 1101-1281 IN COMPLEX WITH DIPEPTIDYL INHIBITORS</scope>
</reference>
<reference evidence="47 48 49" key="18">
    <citation type="journal article" date="2016" name="Eur. J. Med. Chem.">
        <title>Structure-based design and synthesis of triazole-based macrocyclic inhibitors of norovirus protease: Structural, biochemical, spectroscopic, and antiviral studies.</title>
        <authorList>
            <person name="Weerawarna P.M."/>
            <person name="Kim Y."/>
            <person name="Galasiti Kankanamalage A.C."/>
            <person name="Damalanka V.C."/>
            <person name="Lushington G.H."/>
            <person name="Alliston K.R."/>
            <person name="Mehzabeen N."/>
            <person name="Battaile K.P."/>
            <person name="Lovell S."/>
            <person name="Chang K.O."/>
            <person name="Groutas W.C."/>
        </authorList>
    </citation>
    <scope>X-RAY CRYSTALLOGRAPHY (1.20 ANGSTROMS) OF 1101-1281 IN COMPLEX WITH TRIAZOLE-BASED MACROCYCLIC INHIBITORS</scope>
    <scope>ACTIVITY REGULATION (3C-LIKE PROTEASE)</scope>
</reference>
<reference evidence="45 46" key="19">
    <citation type="journal article" date="2016" name="J. Med. Chem.">
        <title>Oxadiazole-Based Cell Permeable Macrocyclic Transition State Inhibitors of Norovirus 3CL Protease.</title>
        <authorList>
            <person name="Damalanka V.C."/>
            <person name="Kim Y."/>
            <person name="Alliston K.R."/>
            <person name="Weerawarna P.M."/>
            <person name="Galasiti Kankanamalage A.C."/>
            <person name="Lushington G.H."/>
            <person name="Mehzabeen N."/>
            <person name="Battaile K.P."/>
            <person name="Lovell S."/>
            <person name="Chang K.O."/>
            <person name="Groutas W.C."/>
        </authorList>
    </citation>
    <scope>X-RAY CRYSTALLOGRAPHY (1.00 ANGSTROMS) OF 1101-1281 IN COMPLEX WITH OXADIAZOLE-BASED MACROCYCLIC INHIBITORS</scope>
    <scope>ACTIVITY REGULATION (3C-LIKE PROTEASE)</scope>
</reference>
<reference evidence="50 51 52" key="20">
    <citation type="journal article" date="2017" name="Eur. J. Med. Chem.">
        <title>Structure-based exploration and exploitation of the S4 subsite of norovirus 3CL protease in the design of potent and permeable inhibitors.</title>
        <authorList>
            <person name="Galasiti Kankanamalage A.C."/>
            <person name="Kim Y."/>
            <person name="Rathnayake A.D."/>
            <person name="Damalanka V.C."/>
            <person name="Weerawarna P.M."/>
            <person name="Doyle S.T."/>
            <person name="Alsoudi A.F."/>
            <person name="Dissanayake D.M.P."/>
            <person name="Lushington G.H."/>
            <person name="Mehzabeen N."/>
            <person name="Battaile K.P."/>
            <person name="Lovell S."/>
            <person name="Chang K.O."/>
            <person name="Groutas W.C."/>
        </authorList>
    </citation>
    <scope>X-RAY CRYSTALLOGRAPHY (1.90 ANGSTROMS) OF 1101-1281 IN COMPLEX WITH INHIBITORS N38 AND N40</scope>
</reference>
<reference evidence="53 54" key="21">
    <citation type="journal article" date="2017" name="Eur. J. Med. Chem.">
        <title>Design, synthesis, and evaluation of a novel series of macrocyclic inhibitors of norovirus 3CL protease.</title>
        <authorList>
            <person name="Damalanka V.C."/>
            <person name="Kim Y."/>
            <person name="Galasiti Kankanamalage A.C."/>
            <person name="Lushington G.H."/>
            <person name="Mehzabeen N."/>
            <person name="Battaile K.P."/>
            <person name="Lovell S."/>
            <person name="Chang K.O."/>
            <person name="Groutas W.C."/>
        </authorList>
    </citation>
    <scope>X-RAY CRYSTALLOGRAPHY (1.40 ANGSTROMS) OF 1101-1281 IN COMPLEX WITH INHIBITORS V56 AND V69</scope>
    <scope>ACTIVITY REGULATION (3C-LIKE PROTEASE)</scope>
</reference>
<reference evidence="55" key="22">
    <citation type="journal article" date="2018" name="Eur. J. Med. Chem.">
        <title>Structure-guided design, synthesis and evaluation of oxazolidinone-based inhibitors of norovirus 3CL protease.</title>
        <authorList>
            <person name="Damalanka V.C."/>
            <person name="Kim Y."/>
            <person name="Galasiti Kankanamalage A.C."/>
            <person name="Rathnayake A.D."/>
            <person name="Mehzabeen N."/>
            <person name="Battaile K.P."/>
            <person name="Lovell S."/>
            <person name="Nguyen H.N."/>
            <person name="Lushington G.H."/>
            <person name="Chang K.O."/>
            <person name="Groutas W.C."/>
        </authorList>
    </citation>
    <scope>X-RAY CRYSTALLOGRAPHY (1.95 ANGSTROMS) OF 1101-1281 IN COMPLEX WITH INHIBITOR V45</scope>
</reference>
<reference evidence="56 57 58" key="23">
    <citation type="journal article" date="2019" name="Proteins">
        <title>Putative structural rearrangements associated with the interaction of macrocyclic inhibitors with norovirus 3CL protease.</title>
        <authorList>
            <person name="Galasiti Kankanamalage A.C."/>
            <person name="Weerawarna P.M."/>
            <person name="Rathnayake A.D."/>
            <person name="Kim Y."/>
            <person name="Mehzabeen N."/>
            <person name="Battaile K.P."/>
            <person name="Lovell S."/>
            <person name="Chang K.O."/>
            <person name="Groutas W.C."/>
        </authorList>
    </citation>
    <scope>X-RAY CRYSTALLOGRAPHY (1.15 ANGSTROMS) OF 1101-1281 IN COMPLEX WITH MACROCYCLIC INHIBITORS DW7; 5LH AND DW4</scope>
    <scope>ACTIVITY REGULATION (3C-LIKE PROTEASE)</scope>
</reference>
<reference evidence="59 60 61 62" key="24">
    <citation type="journal article" date="2020" name="J. Med. Chem.">
        <title>Structure-Guided Optimization of Dipeptidyl Inhibitors of Norovirus 3CL Protease.</title>
        <authorList>
            <person name="Rathnayake A.D."/>
            <person name="Kim Y."/>
            <person name="Dampalla C.S."/>
            <person name="Nguyen H.N."/>
            <person name="Jesri A.M."/>
            <person name="Kashipathy M.M."/>
            <person name="Lushington G.H."/>
            <person name="Battaile K.P."/>
            <person name="Lovell S."/>
            <person name="Chang K.O."/>
            <person name="Groutas W.C."/>
        </authorList>
    </citation>
    <scope>X-RAY CRYSTALLOGRAPHY (1.85 ANGSTROMS) OF 1101-1281</scope>
</reference>
<name>POLG_NVN68</name>
<sequence>MMMASKDVVPTAASSENANNNSSIKSRLLARLKGSGGATSPPNSIKITNQDMALGLIGQVPAPKATSVDVPKQQRDRPPRTVAEVQQNLRWTERPQDQNVKTWDELDHTTKQQILDEHAEWFDAGGLGPSTLPTSHERYTHENDEGHQVKWSAREGVDLGISGLTTVSGPEWNMCPLPPVDQRSTTPATEPTIGDMIEFYEGHIYHYAIYIGQGKTVGVHSPQAAFSITRITIQPISAWWRVCYVPQPKQRLTYDQLKELENEPWPYAAVTNNCFEFCCQVMCLEDTWLQRKLISSGRFYHPTQDWSRDTPEFQQDSKLEMVRDAVLAAINGLVSRPFKDLLGKLKPLNVLNLLSNCDWTFMGVVEMVVLLLELFGIFWNPPDVSNFIASLLPDFHLQGPEDLARDLVPIVLGGIGLAIGFTRDKVSKMMKNAVDGLRAATQLGQYGLEIFSLLKKYFFGGDQTEKTLKDIESAVIDMEVLSSTSVTQLVRDKQSARAYMAILDNEEEKARKLSVRNADPHVVSSTNALISRISMARAALAKAQAEMTSRMRPVVIMMCGPPGIGKTKAAEHLAKRLANEIRPGGKVGLVPREAVDHWDGYHGEEVMLWDDYGMTKIQEDCNKLQAIADSAPLTLNCDRIENKGMQFVSDAIVITTNAPGPAPVDFVNLGPVCRRVDFLVYCTAPEVEHTRKVSPGDTTALKDCFKPDFSHLKMELAPQGGFDNQGNTPFGKGVMKPTTINRLLIQAVALTMERQDEFQLQGPTYDFDTDRVAAFTRMARANGLGLISMASLGKKLRSVTTIEGLKNALSGYKISKCSIQWQSRVYIIESDGASVQIKEDKQALTPLQQTINTASLAITRLKAARAVAYASCFQSAITTILQMAGSALVINRAVKRMFGTRTAAMALEGPGKEHNCRVHKAKEAGKGPIGHDDMVERFGLCETEEEESEDQIQMVPSDAVPEGKNKGKTKKGRGRKNNYNAFSRRGLSDEEYEEYKKIREEKNGNYSIQEYLEDRQRYEEELAEVQAGGDGGIGETEMEIRHRVFYKSKSKKHQQEQRRQLGLVTGSDIRKRKPIDWTPPKNEWADDDREVDYNEKINFEAPPTLWSRVTKFGSGWGFWVSPTVFITTTHVVPTGVKEFFGEPLSSIAIHQAGEFTQFRFSKKMRPDLTGMVLEEGCPEGTVCSVLIKRDSGELLPLAVRMGAIASMRIQGRLVHGQSGMLLTGANAKGMDLGTIPGDCGAPYVHKRGNDWVVCGVHAAATKSGNTVVCAVQAGEGETALEGGDKGHYAGHEIVRYGSGPALSTKTKFWRSSPEPLPPGVYEPAYLGGKDPRVQNGPSLQQVLRDQLKPFADPRGRMPEPGLLEAAVETVTSMLEQTMDTPSPWSYADACQSLDKTTSSGYPHHKRKNDDWNGTTFVGELGEQAAHANNMYENAKHMKPIYTAALKDELVKPEKIYQKVKKRLLWGADLGTVVRAARAFGPFCDAIKSHVIKLPIKVGMNTIEDGPLIYAEHAKYKNHFDADYTAWDSTQNRQIMTESFSIMSRLTASPELAEVVAQDLLAPSEMDVGDYVIRVKEGLPSGFPCTSQVNSINHWIITLCALSEATGLSPDVVQSMSYFSFYGDDEIVSTDIDFDPARLTQILKEYGLKPTRPDKTEGPIQVRKNVDGLVFLRRTISRDAAGFQGRLDRASIERQIFWTRGPNHSDPSETLVPHTQRKIQLISLLGEASLHGEKFYRKISSKVIHEIKTGGLEMYVPGWQAMFRWMRFHDLGLWTGDRDLLPEFVNDDGV</sequence>
<keyword id="KW-0002">3D-structure</keyword>
<keyword id="KW-0067">ATP-binding</keyword>
<keyword id="KW-0191">Covalent protein-RNA linkage</keyword>
<keyword id="KW-1035">Host cytoplasm</keyword>
<keyword id="KW-1038">Host endoplasmic reticulum</keyword>
<keyword id="KW-1040">Host Golgi apparatus</keyword>
<keyword id="KW-1043">Host membrane</keyword>
<keyword id="KW-0945">Host-virus interaction</keyword>
<keyword id="KW-0378">Hydrolase</keyword>
<keyword id="KW-0460">Magnesium</keyword>
<keyword id="KW-0472">Membrane</keyword>
<keyword id="KW-0479">Metal-binding</keyword>
<keyword id="KW-0547">Nucleotide-binding</keyword>
<keyword id="KW-0548">Nucleotidyltransferase</keyword>
<keyword id="KW-0597">Phosphoprotein</keyword>
<keyword id="KW-0645">Protease</keyword>
<keyword id="KW-1185">Reference proteome</keyword>
<keyword id="KW-0696">RNA-directed RNA polymerase</keyword>
<keyword id="KW-0964">Secreted</keyword>
<keyword id="KW-0788">Thiol protease</keyword>
<keyword id="KW-0808">Transferase</keyword>
<keyword id="KW-0693">Viral RNA replication</keyword>